<keyword id="KW-1185">Reference proteome</keyword>
<keyword id="KW-0687">Ribonucleoprotein</keyword>
<keyword id="KW-0689">Ribosomal protein</keyword>
<accession>A6GZA0</accession>
<feature type="chain" id="PRO_1000015020" description="Small ribosomal subunit protein uS10">
    <location>
        <begin position="1"/>
        <end position="101"/>
    </location>
</feature>
<proteinExistence type="inferred from homology"/>
<dbReference type="EMBL" id="AM398681">
    <property type="protein sequence ID" value="CAL43423.1"/>
    <property type="molecule type" value="Genomic_DNA"/>
</dbReference>
<dbReference type="RefSeq" id="WP_011963470.1">
    <property type="nucleotide sequence ID" value="NC_009613.3"/>
</dbReference>
<dbReference type="RefSeq" id="YP_001296234.1">
    <property type="nucleotide sequence ID" value="NC_009613.3"/>
</dbReference>
<dbReference type="SMR" id="A6GZA0"/>
<dbReference type="STRING" id="402612.FP1340"/>
<dbReference type="EnsemblBacteria" id="CAL43423">
    <property type="protein sequence ID" value="CAL43423"/>
    <property type="gene ID" value="FP1340"/>
</dbReference>
<dbReference type="GeneID" id="66553243"/>
<dbReference type="KEGG" id="fps:FP1340"/>
<dbReference type="PATRIC" id="fig|402612.5.peg.1357"/>
<dbReference type="eggNOG" id="COG0051">
    <property type="taxonomic scope" value="Bacteria"/>
</dbReference>
<dbReference type="HOGENOM" id="CLU_122625_1_3_10"/>
<dbReference type="OrthoDB" id="9804464at2"/>
<dbReference type="Proteomes" id="UP000006394">
    <property type="component" value="Chromosome"/>
</dbReference>
<dbReference type="GO" id="GO:1990904">
    <property type="term" value="C:ribonucleoprotein complex"/>
    <property type="evidence" value="ECO:0007669"/>
    <property type="project" value="UniProtKB-KW"/>
</dbReference>
<dbReference type="GO" id="GO:0005840">
    <property type="term" value="C:ribosome"/>
    <property type="evidence" value="ECO:0007669"/>
    <property type="project" value="UniProtKB-KW"/>
</dbReference>
<dbReference type="GO" id="GO:0003735">
    <property type="term" value="F:structural constituent of ribosome"/>
    <property type="evidence" value="ECO:0007669"/>
    <property type="project" value="InterPro"/>
</dbReference>
<dbReference type="GO" id="GO:0000049">
    <property type="term" value="F:tRNA binding"/>
    <property type="evidence" value="ECO:0007669"/>
    <property type="project" value="UniProtKB-UniRule"/>
</dbReference>
<dbReference type="GO" id="GO:0006412">
    <property type="term" value="P:translation"/>
    <property type="evidence" value="ECO:0007669"/>
    <property type="project" value="UniProtKB-UniRule"/>
</dbReference>
<dbReference type="FunFam" id="3.30.70.600:FF:000003">
    <property type="entry name" value="30S ribosomal protein S10"/>
    <property type="match status" value="1"/>
</dbReference>
<dbReference type="Gene3D" id="3.30.70.600">
    <property type="entry name" value="Ribosomal protein S10 domain"/>
    <property type="match status" value="1"/>
</dbReference>
<dbReference type="HAMAP" id="MF_00508">
    <property type="entry name" value="Ribosomal_uS10"/>
    <property type="match status" value="1"/>
</dbReference>
<dbReference type="InterPro" id="IPR001848">
    <property type="entry name" value="Ribosomal_uS10"/>
</dbReference>
<dbReference type="InterPro" id="IPR018268">
    <property type="entry name" value="Ribosomal_uS10_CS"/>
</dbReference>
<dbReference type="InterPro" id="IPR027486">
    <property type="entry name" value="Ribosomal_uS10_dom"/>
</dbReference>
<dbReference type="InterPro" id="IPR036838">
    <property type="entry name" value="Ribosomal_uS10_dom_sf"/>
</dbReference>
<dbReference type="NCBIfam" id="NF001861">
    <property type="entry name" value="PRK00596.1"/>
    <property type="match status" value="1"/>
</dbReference>
<dbReference type="NCBIfam" id="TIGR01049">
    <property type="entry name" value="rpsJ_bact"/>
    <property type="match status" value="1"/>
</dbReference>
<dbReference type="PANTHER" id="PTHR11700">
    <property type="entry name" value="30S RIBOSOMAL PROTEIN S10 FAMILY MEMBER"/>
    <property type="match status" value="1"/>
</dbReference>
<dbReference type="Pfam" id="PF00338">
    <property type="entry name" value="Ribosomal_S10"/>
    <property type="match status" value="1"/>
</dbReference>
<dbReference type="PRINTS" id="PR00971">
    <property type="entry name" value="RIBOSOMALS10"/>
</dbReference>
<dbReference type="SMART" id="SM01403">
    <property type="entry name" value="Ribosomal_S10"/>
    <property type="match status" value="1"/>
</dbReference>
<dbReference type="SUPFAM" id="SSF54999">
    <property type="entry name" value="Ribosomal protein S10"/>
    <property type="match status" value="1"/>
</dbReference>
<dbReference type="PROSITE" id="PS00361">
    <property type="entry name" value="RIBOSOMAL_S10"/>
    <property type="match status" value="1"/>
</dbReference>
<evidence type="ECO:0000255" key="1">
    <source>
        <dbReference type="HAMAP-Rule" id="MF_00508"/>
    </source>
</evidence>
<evidence type="ECO:0000305" key="2"/>
<organism>
    <name type="scientific">Flavobacterium psychrophilum (strain ATCC 49511 / DSM 21280 / CIP 103535 / JIP02/86)</name>
    <dbReference type="NCBI Taxonomy" id="402612"/>
    <lineage>
        <taxon>Bacteria</taxon>
        <taxon>Pseudomonadati</taxon>
        <taxon>Bacteroidota</taxon>
        <taxon>Flavobacteriia</taxon>
        <taxon>Flavobacteriales</taxon>
        <taxon>Flavobacteriaceae</taxon>
        <taxon>Flavobacterium</taxon>
    </lineage>
</organism>
<sequence>MSQKIRIKLKSYDHMLVDKSAEKIVKTVKSTGAVVTGPIPLPTHKKLFTVLRSPHVNKKAREQFEVMSYKRLIDIYSSSSKTIDALMKLELPSGVEVEIKV</sequence>
<gene>
    <name evidence="1" type="primary">rpsJ</name>
    <name type="ordered locus">FP1340</name>
</gene>
<protein>
    <recommendedName>
        <fullName evidence="1">Small ribosomal subunit protein uS10</fullName>
    </recommendedName>
    <alternativeName>
        <fullName evidence="2">30S ribosomal protein S10</fullName>
    </alternativeName>
</protein>
<name>RS10_FLAPJ</name>
<reference key="1">
    <citation type="journal article" date="2007" name="Nat. Biotechnol.">
        <title>Complete genome sequence of the fish pathogen Flavobacterium psychrophilum.</title>
        <authorList>
            <person name="Duchaud E."/>
            <person name="Boussaha M."/>
            <person name="Loux V."/>
            <person name="Bernardet J.-F."/>
            <person name="Michel C."/>
            <person name="Kerouault B."/>
            <person name="Mondot S."/>
            <person name="Nicolas P."/>
            <person name="Bossy R."/>
            <person name="Caron C."/>
            <person name="Bessieres P."/>
            <person name="Gibrat J.-F."/>
            <person name="Claverol S."/>
            <person name="Dumetz F."/>
            <person name="Le Henaff M."/>
            <person name="Benmansour A."/>
        </authorList>
    </citation>
    <scope>NUCLEOTIDE SEQUENCE [LARGE SCALE GENOMIC DNA]</scope>
    <source>
        <strain>ATCC 49511 / DSM 21280 / CIP 103535 / JIP02/86</strain>
    </source>
</reference>
<comment type="function">
    <text evidence="1">Involved in the binding of tRNA to the ribosomes.</text>
</comment>
<comment type="subunit">
    <text evidence="1">Part of the 30S ribosomal subunit.</text>
</comment>
<comment type="similarity">
    <text evidence="1">Belongs to the universal ribosomal protein uS10 family.</text>
</comment>